<sequence length="615" mass="67896">MPIQVLPPQLANQIAAGEVVERPASVVKELVENSLDAGATRIDIDIERGGAKLIRIRDNGCGIKKDELALALARHATSKIASLDDLEAIISLGFRGEALASISSVSRLTLTSRTAEQQEAWQAYAEGRDMDVTVKPAAHPVGTTLEVLDLFYNTPARRKFLRTEKTEFSHIDEIIRRIALARFDVTINLSHNGKIVRQYRAVPEGGQKERRLGAICGTAFLEQALAIEWQHGDLTLRGWVADPNHTTPALAEIQYCYVNGRMMRDRLINHAIRQACEDKLGADQQPAFVLYLEIDPHQVDVNVHPAKHEVRFHQSRLVHDFIYQGVLSVLQQQLETPLPLDDEPQPAPRSIPENRVAAGRNHFAEPAAREPVAPRYTPAPASGSRPAAPWPNAQPGYQKQQGEVYRQLLQTPAPMQKLKAPEPQEPALAANSQSFGRVLTIVHSDCALLERDGNISLLALPVAERWLRQVQLTPGEAPVCAQPLLIPLRLKVSGEEKSALEKAQSALAELGIDFQSDAQHVTIRAVPLPLRQQNLQILIPELIGYLAKQSVFEPGNIAQWIARNLMSEHAQWSMAQAITLLADVERLCPQLVKTPPGGLLQSVDLHPAIKALKDE</sequence>
<organism>
    <name type="scientific">Shigella boydii serotype 4 (strain Sb227)</name>
    <dbReference type="NCBI Taxonomy" id="300268"/>
    <lineage>
        <taxon>Bacteria</taxon>
        <taxon>Pseudomonadati</taxon>
        <taxon>Pseudomonadota</taxon>
        <taxon>Gammaproteobacteria</taxon>
        <taxon>Enterobacterales</taxon>
        <taxon>Enterobacteriaceae</taxon>
        <taxon>Shigella</taxon>
    </lineage>
</organism>
<comment type="function">
    <text evidence="1">This protein is involved in the repair of mismatches in DNA. It is required for dam-dependent methyl-directed DNA mismatch repair. May act as a 'molecular matchmaker', a protein that promotes the formation of a stable complex between two or more DNA-binding proteins in an ATP-dependent manner without itself being part of a final effector complex.</text>
</comment>
<comment type="similarity">
    <text evidence="1">Belongs to the DNA mismatch repair MutL/HexB family.</text>
</comment>
<feature type="chain" id="PRO_1000010076" description="DNA mismatch repair protein MutL">
    <location>
        <begin position="1"/>
        <end position="615"/>
    </location>
</feature>
<feature type="region of interest" description="Disordered" evidence="2">
    <location>
        <begin position="363"/>
        <end position="397"/>
    </location>
</feature>
<feature type="compositionally biased region" description="Low complexity" evidence="2">
    <location>
        <begin position="364"/>
        <end position="391"/>
    </location>
</feature>
<gene>
    <name evidence="1" type="primary">mutL</name>
    <name type="ordered locus">SBO_4286</name>
</gene>
<protein>
    <recommendedName>
        <fullName evidence="1">DNA mismatch repair protein MutL</fullName>
    </recommendedName>
</protein>
<evidence type="ECO:0000255" key="1">
    <source>
        <dbReference type="HAMAP-Rule" id="MF_00149"/>
    </source>
</evidence>
<evidence type="ECO:0000256" key="2">
    <source>
        <dbReference type="SAM" id="MobiDB-lite"/>
    </source>
</evidence>
<dbReference type="EMBL" id="CP000036">
    <property type="protein sequence ID" value="ABB68708.1"/>
    <property type="molecule type" value="Genomic_DNA"/>
</dbReference>
<dbReference type="RefSeq" id="WP_001122491.1">
    <property type="nucleotide sequence ID" value="NC_007613.1"/>
</dbReference>
<dbReference type="SMR" id="Q31TA0"/>
<dbReference type="KEGG" id="sbo:SBO_4286"/>
<dbReference type="HOGENOM" id="CLU_004131_5_1_6"/>
<dbReference type="Proteomes" id="UP000007067">
    <property type="component" value="Chromosome"/>
</dbReference>
<dbReference type="GO" id="GO:0032300">
    <property type="term" value="C:mismatch repair complex"/>
    <property type="evidence" value="ECO:0007669"/>
    <property type="project" value="InterPro"/>
</dbReference>
<dbReference type="GO" id="GO:0005524">
    <property type="term" value="F:ATP binding"/>
    <property type="evidence" value="ECO:0007669"/>
    <property type="project" value="InterPro"/>
</dbReference>
<dbReference type="GO" id="GO:0016887">
    <property type="term" value="F:ATP hydrolysis activity"/>
    <property type="evidence" value="ECO:0007669"/>
    <property type="project" value="InterPro"/>
</dbReference>
<dbReference type="GO" id="GO:0140664">
    <property type="term" value="F:ATP-dependent DNA damage sensor activity"/>
    <property type="evidence" value="ECO:0007669"/>
    <property type="project" value="InterPro"/>
</dbReference>
<dbReference type="GO" id="GO:0030983">
    <property type="term" value="F:mismatched DNA binding"/>
    <property type="evidence" value="ECO:0007669"/>
    <property type="project" value="InterPro"/>
</dbReference>
<dbReference type="GO" id="GO:0006298">
    <property type="term" value="P:mismatch repair"/>
    <property type="evidence" value="ECO:0007669"/>
    <property type="project" value="UniProtKB-UniRule"/>
</dbReference>
<dbReference type="CDD" id="cd16926">
    <property type="entry name" value="HATPase_MutL-MLH-PMS-like"/>
    <property type="match status" value="1"/>
</dbReference>
<dbReference type="CDD" id="cd03482">
    <property type="entry name" value="MutL_Trans_MutL"/>
    <property type="match status" value="1"/>
</dbReference>
<dbReference type="FunFam" id="3.30.230.10:FF:000013">
    <property type="entry name" value="DNA mismatch repair endonuclease MutL"/>
    <property type="match status" value="1"/>
</dbReference>
<dbReference type="FunFam" id="3.30.565.10:FF:000003">
    <property type="entry name" value="DNA mismatch repair endonuclease MutL"/>
    <property type="match status" value="1"/>
</dbReference>
<dbReference type="FunFam" id="3.30.1370.100:FF:000002">
    <property type="entry name" value="DNA mismatch repair protein MutL"/>
    <property type="match status" value="1"/>
</dbReference>
<dbReference type="Gene3D" id="3.30.230.10">
    <property type="match status" value="1"/>
</dbReference>
<dbReference type="Gene3D" id="3.30.565.10">
    <property type="entry name" value="Histidine kinase-like ATPase, C-terminal domain"/>
    <property type="match status" value="1"/>
</dbReference>
<dbReference type="Gene3D" id="3.30.1540.20">
    <property type="entry name" value="MutL, C-terminal domain, dimerisation subdomain"/>
    <property type="match status" value="1"/>
</dbReference>
<dbReference type="Gene3D" id="3.30.1370.100">
    <property type="entry name" value="MutL, C-terminal domain, regulatory subdomain"/>
    <property type="match status" value="1"/>
</dbReference>
<dbReference type="HAMAP" id="MF_00149">
    <property type="entry name" value="DNA_mis_repair"/>
    <property type="match status" value="1"/>
</dbReference>
<dbReference type="InterPro" id="IPR014762">
    <property type="entry name" value="DNA_mismatch_repair_CS"/>
</dbReference>
<dbReference type="InterPro" id="IPR020667">
    <property type="entry name" value="DNA_mismatch_repair_MutL"/>
</dbReference>
<dbReference type="InterPro" id="IPR013507">
    <property type="entry name" value="DNA_mismatch_S5_2-like"/>
</dbReference>
<dbReference type="InterPro" id="IPR036890">
    <property type="entry name" value="HATPase_C_sf"/>
</dbReference>
<dbReference type="InterPro" id="IPR002099">
    <property type="entry name" value="MutL/Mlh/PMS"/>
</dbReference>
<dbReference type="InterPro" id="IPR038973">
    <property type="entry name" value="MutL/Mlh/Pms-like"/>
</dbReference>
<dbReference type="InterPro" id="IPR014790">
    <property type="entry name" value="MutL_C"/>
</dbReference>
<dbReference type="InterPro" id="IPR042120">
    <property type="entry name" value="MutL_C_dimsub"/>
</dbReference>
<dbReference type="InterPro" id="IPR042121">
    <property type="entry name" value="MutL_C_regsub"/>
</dbReference>
<dbReference type="InterPro" id="IPR037198">
    <property type="entry name" value="MutL_C_sf"/>
</dbReference>
<dbReference type="InterPro" id="IPR020568">
    <property type="entry name" value="Ribosomal_Su5_D2-typ_SF"/>
</dbReference>
<dbReference type="InterPro" id="IPR014721">
    <property type="entry name" value="Ribsml_uS5_D2-typ_fold_subgr"/>
</dbReference>
<dbReference type="NCBIfam" id="TIGR00585">
    <property type="entry name" value="mutl"/>
    <property type="match status" value="1"/>
</dbReference>
<dbReference type="NCBIfam" id="NF000948">
    <property type="entry name" value="PRK00095.1-1"/>
    <property type="match status" value="1"/>
</dbReference>
<dbReference type="PANTHER" id="PTHR10073">
    <property type="entry name" value="DNA MISMATCH REPAIR PROTEIN MLH, PMS, MUTL"/>
    <property type="match status" value="1"/>
</dbReference>
<dbReference type="PANTHER" id="PTHR10073:SF12">
    <property type="entry name" value="DNA MISMATCH REPAIR PROTEIN MLH1"/>
    <property type="match status" value="1"/>
</dbReference>
<dbReference type="Pfam" id="PF01119">
    <property type="entry name" value="DNA_mis_repair"/>
    <property type="match status" value="1"/>
</dbReference>
<dbReference type="Pfam" id="PF13589">
    <property type="entry name" value="HATPase_c_3"/>
    <property type="match status" value="1"/>
</dbReference>
<dbReference type="Pfam" id="PF08676">
    <property type="entry name" value="MutL_C"/>
    <property type="match status" value="1"/>
</dbReference>
<dbReference type="SMART" id="SM01340">
    <property type="entry name" value="DNA_mis_repair"/>
    <property type="match status" value="1"/>
</dbReference>
<dbReference type="SMART" id="SM00853">
    <property type="entry name" value="MutL_C"/>
    <property type="match status" value="1"/>
</dbReference>
<dbReference type="SUPFAM" id="SSF55874">
    <property type="entry name" value="ATPase domain of HSP90 chaperone/DNA topoisomerase II/histidine kinase"/>
    <property type="match status" value="1"/>
</dbReference>
<dbReference type="SUPFAM" id="SSF118116">
    <property type="entry name" value="DNA mismatch repair protein MutL"/>
    <property type="match status" value="1"/>
</dbReference>
<dbReference type="SUPFAM" id="SSF54211">
    <property type="entry name" value="Ribosomal protein S5 domain 2-like"/>
    <property type="match status" value="1"/>
</dbReference>
<dbReference type="PROSITE" id="PS00058">
    <property type="entry name" value="DNA_MISMATCH_REPAIR_1"/>
    <property type="match status" value="1"/>
</dbReference>
<name>MUTL_SHIBS</name>
<accession>Q31TA0</accession>
<reference key="1">
    <citation type="journal article" date="2005" name="Nucleic Acids Res.">
        <title>Genome dynamics and diversity of Shigella species, the etiologic agents of bacillary dysentery.</title>
        <authorList>
            <person name="Yang F."/>
            <person name="Yang J."/>
            <person name="Zhang X."/>
            <person name="Chen L."/>
            <person name="Jiang Y."/>
            <person name="Yan Y."/>
            <person name="Tang X."/>
            <person name="Wang J."/>
            <person name="Xiong Z."/>
            <person name="Dong J."/>
            <person name="Xue Y."/>
            <person name="Zhu Y."/>
            <person name="Xu X."/>
            <person name="Sun L."/>
            <person name="Chen S."/>
            <person name="Nie H."/>
            <person name="Peng J."/>
            <person name="Xu J."/>
            <person name="Wang Y."/>
            <person name="Yuan Z."/>
            <person name="Wen Y."/>
            <person name="Yao Z."/>
            <person name="Shen Y."/>
            <person name="Qiang B."/>
            <person name="Hou Y."/>
            <person name="Yu J."/>
            <person name="Jin Q."/>
        </authorList>
    </citation>
    <scope>NUCLEOTIDE SEQUENCE [LARGE SCALE GENOMIC DNA]</scope>
    <source>
        <strain>Sb227</strain>
    </source>
</reference>
<keyword id="KW-0227">DNA damage</keyword>
<keyword id="KW-0234">DNA repair</keyword>
<proteinExistence type="inferred from homology"/>